<protein>
    <recommendedName>
        <fullName evidence="1">Leucine--tRNA ligase</fullName>
        <ecNumber evidence="1">6.1.1.4</ecNumber>
    </recommendedName>
    <alternativeName>
        <fullName evidence="1">Leucyl-tRNA synthetase</fullName>
        <shortName evidence="1">LeuRS</shortName>
    </alternativeName>
</protein>
<keyword id="KW-0030">Aminoacyl-tRNA synthetase</keyword>
<keyword id="KW-0067">ATP-binding</keyword>
<keyword id="KW-0963">Cytoplasm</keyword>
<keyword id="KW-0436">Ligase</keyword>
<keyword id="KW-0547">Nucleotide-binding</keyword>
<keyword id="KW-0648">Protein biosynthesis</keyword>
<keyword id="KW-1185">Reference proteome</keyword>
<name>SYL_ECO27</name>
<dbReference type="EC" id="6.1.1.4" evidence="1"/>
<dbReference type="EMBL" id="FM180568">
    <property type="protein sequence ID" value="CAS08090.1"/>
    <property type="molecule type" value="Genomic_DNA"/>
</dbReference>
<dbReference type="RefSeq" id="WP_001339340.1">
    <property type="nucleotide sequence ID" value="NC_011601.1"/>
</dbReference>
<dbReference type="SMR" id="B7UKT2"/>
<dbReference type="KEGG" id="ecg:E2348C_0542"/>
<dbReference type="HOGENOM" id="CLU_004427_0_0_6"/>
<dbReference type="Proteomes" id="UP000008205">
    <property type="component" value="Chromosome"/>
</dbReference>
<dbReference type="GO" id="GO:0005829">
    <property type="term" value="C:cytosol"/>
    <property type="evidence" value="ECO:0007669"/>
    <property type="project" value="TreeGrafter"/>
</dbReference>
<dbReference type="GO" id="GO:0002161">
    <property type="term" value="F:aminoacyl-tRNA deacylase activity"/>
    <property type="evidence" value="ECO:0007669"/>
    <property type="project" value="InterPro"/>
</dbReference>
<dbReference type="GO" id="GO:0005524">
    <property type="term" value="F:ATP binding"/>
    <property type="evidence" value="ECO:0007669"/>
    <property type="project" value="UniProtKB-UniRule"/>
</dbReference>
<dbReference type="GO" id="GO:0004823">
    <property type="term" value="F:leucine-tRNA ligase activity"/>
    <property type="evidence" value="ECO:0007669"/>
    <property type="project" value="UniProtKB-UniRule"/>
</dbReference>
<dbReference type="GO" id="GO:0006429">
    <property type="term" value="P:leucyl-tRNA aminoacylation"/>
    <property type="evidence" value="ECO:0007669"/>
    <property type="project" value="UniProtKB-UniRule"/>
</dbReference>
<dbReference type="CDD" id="cd07958">
    <property type="entry name" value="Anticodon_Ia_Leu_BEm"/>
    <property type="match status" value="1"/>
</dbReference>
<dbReference type="CDD" id="cd00812">
    <property type="entry name" value="LeuRS_core"/>
    <property type="match status" value="1"/>
</dbReference>
<dbReference type="FunFam" id="1.10.730.10:FF:000002">
    <property type="entry name" value="Leucine--tRNA ligase"/>
    <property type="match status" value="2"/>
</dbReference>
<dbReference type="FunFam" id="2.20.28.290:FF:000001">
    <property type="entry name" value="Leucine--tRNA ligase"/>
    <property type="match status" value="1"/>
</dbReference>
<dbReference type="FunFam" id="3.10.20.590:FF:000001">
    <property type="entry name" value="Leucine--tRNA ligase"/>
    <property type="match status" value="1"/>
</dbReference>
<dbReference type="FunFam" id="3.40.50.620:FF:000003">
    <property type="entry name" value="Leucine--tRNA ligase"/>
    <property type="match status" value="1"/>
</dbReference>
<dbReference type="FunFam" id="3.40.50.620:FF:000124">
    <property type="entry name" value="Leucine--tRNA ligase"/>
    <property type="match status" value="1"/>
</dbReference>
<dbReference type="FunFam" id="3.90.740.10:FF:000012">
    <property type="entry name" value="Leucine--tRNA ligase"/>
    <property type="match status" value="1"/>
</dbReference>
<dbReference type="Gene3D" id="2.20.28.290">
    <property type="match status" value="1"/>
</dbReference>
<dbReference type="Gene3D" id="3.10.20.590">
    <property type="match status" value="1"/>
</dbReference>
<dbReference type="Gene3D" id="3.40.50.620">
    <property type="entry name" value="HUPs"/>
    <property type="match status" value="2"/>
</dbReference>
<dbReference type="Gene3D" id="1.10.730.10">
    <property type="entry name" value="Isoleucyl-tRNA Synthetase, Domain 1"/>
    <property type="match status" value="2"/>
</dbReference>
<dbReference type="HAMAP" id="MF_00049_B">
    <property type="entry name" value="Leu_tRNA_synth_B"/>
    <property type="match status" value="1"/>
</dbReference>
<dbReference type="InterPro" id="IPR001412">
    <property type="entry name" value="aa-tRNA-synth_I_CS"/>
</dbReference>
<dbReference type="InterPro" id="IPR002300">
    <property type="entry name" value="aa-tRNA-synth_Ia"/>
</dbReference>
<dbReference type="InterPro" id="IPR002302">
    <property type="entry name" value="Leu-tRNA-ligase"/>
</dbReference>
<dbReference type="InterPro" id="IPR025709">
    <property type="entry name" value="Leu_tRNA-synth_edit"/>
</dbReference>
<dbReference type="InterPro" id="IPR013155">
    <property type="entry name" value="M/V/L/I-tRNA-synth_anticd-bd"/>
</dbReference>
<dbReference type="InterPro" id="IPR015413">
    <property type="entry name" value="Methionyl/Leucyl_tRNA_Synth"/>
</dbReference>
<dbReference type="InterPro" id="IPR014729">
    <property type="entry name" value="Rossmann-like_a/b/a_fold"/>
</dbReference>
<dbReference type="InterPro" id="IPR009080">
    <property type="entry name" value="tRNAsynth_Ia_anticodon-bd"/>
</dbReference>
<dbReference type="InterPro" id="IPR009008">
    <property type="entry name" value="Val/Leu/Ile-tRNA-synth_edit"/>
</dbReference>
<dbReference type="NCBIfam" id="TIGR00396">
    <property type="entry name" value="leuS_bact"/>
    <property type="match status" value="1"/>
</dbReference>
<dbReference type="PANTHER" id="PTHR43740:SF2">
    <property type="entry name" value="LEUCINE--TRNA LIGASE, MITOCHONDRIAL"/>
    <property type="match status" value="1"/>
</dbReference>
<dbReference type="PANTHER" id="PTHR43740">
    <property type="entry name" value="LEUCYL-TRNA SYNTHETASE"/>
    <property type="match status" value="1"/>
</dbReference>
<dbReference type="Pfam" id="PF08264">
    <property type="entry name" value="Anticodon_1"/>
    <property type="match status" value="1"/>
</dbReference>
<dbReference type="Pfam" id="PF00133">
    <property type="entry name" value="tRNA-synt_1"/>
    <property type="match status" value="2"/>
</dbReference>
<dbReference type="Pfam" id="PF13603">
    <property type="entry name" value="tRNA-synt_1_2"/>
    <property type="match status" value="1"/>
</dbReference>
<dbReference type="Pfam" id="PF09334">
    <property type="entry name" value="tRNA-synt_1g"/>
    <property type="match status" value="1"/>
</dbReference>
<dbReference type="PRINTS" id="PR00985">
    <property type="entry name" value="TRNASYNTHLEU"/>
</dbReference>
<dbReference type="SUPFAM" id="SSF47323">
    <property type="entry name" value="Anticodon-binding domain of a subclass of class I aminoacyl-tRNA synthetases"/>
    <property type="match status" value="1"/>
</dbReference>
<dbReference type="SUPFAM" id="SSF52374">
    <property type="entry name" value="Nucleotidylyl transferase"/>
    <property type="match status" value="1"/>
</dbReference>
<dbReference type="SUPFAM" id="SSF50677">
    <property type="entry name" value="ValRS/IleRS/LeuRS editing domain"/>
    <property type="match status" value="1"/>
</dbReference>
<dbReference type="PROSITE" id="PS00178">
    <property type="entry name" value="AA_TRNA_LIGASE_I"/>
    <property type="match status" value="1"/>
</dbReference>
<organism>
    <name type="scientific">Escherichia coli O127:H6 (strain E2348/69 / EPEC)</name>
    <dbReference type="NCBI Taxonomy" id="574521"/>
    <lineage>
        <taxon>Bacteria</taxon>
        <taxon>Pseudomonadati</taxon>
        <taxon>Pseudomonadota</taxon>
        <taxon>Gammaproteobacteria</taxon>
        <taxon>Enterobacterales</taxon>
        <taxon>Enterobacteriaceae</taxon>
        <taxon>Escherichia</taxon>
    </lineage>
</organism>
<gene>
    <name evidence="1" type="primary">leuS</name>
    <name type="ordered locus">E2348C_0542</name>
</gene>
<comment type="catalytic activity">
    <reaction evidence="1">
        <text>tRNA(Leu) + L-leucine + ATP = L-leucyl-tRNA(Leu) + AMP + diphosphate</text>
        <dbReference type="Rhea" id="RHEA:11688"/>
        <dbReference type="Rhea" id="RHEA-COMP:9613"/>
        <dbReference type="Rhea" id="RHEA-COMP:9622"/>
        <dbReference type="ChEBI" id="CHEBI:30616"/>
        <dbReference type="ChEBI" id="CHEBI:33019"/>
        <dbReference type="ChEBI" id="CHEBI:57427"/>
        <dbReference type="ChEBI" id="CHEBI:78442"/>
        <dbReference type="ChEBI" id="CHEBI:78494"/>
        <dbReference type="ChEBI" id="CHEBI:456215"/>
        <dbReference type="EC" id="6.1.1.4"/>
    </reaction>
</comment>
<comment type="subcellular location">
    <subcellularLocation>
        <location evidence="1">Cytoplasm</location>
    </subcellularLocation>
</comment>
<comment type="similarity">
    <text evidence="1">Belongs to the class-I aminoacyl-tRNA synthetase family.</text>
</comment>
<proteinExistence type="inferred from homology"/>
<reference key="1">
    <citation type="journal article" date="2009" name="J. Bacteriol.">
        <title>Complete genome sequence and comparative genome analysis of enteropathogenic Escherichia coli O127:H6 strain E2348/69.</title>
        <authorList>
            <person name="Iguchi A."/>
            <person name="Thomson N.R."/>
            <person name="Ogura Y."/>
            <person name="Saunders D."/>
            <person name="Ooka T."/>
            <person name="Henderson I.R."/>
            <person name="Harris D."/>
            <person name="Asadulghani M."/>
            <person name="Kurokawa K."/>
            <person name="Dean P."/>
            <person name="Kenny B."/>
            <person name="Quail M.A."/>
            <person name="Thurston S."/>
            <person name="Dougan G."/>
            <person name="Hayashi T."/>
            <person name="Parkhill J."/>
            <person name="Frankel G."/>
        </authorList>
    </citation>
    <scope>NUCLEOTIDE SEQUENCE [LARGE SCALE GENOMIC DNA]</scope>
    <source>
        <strain>E2348/69 / EPEC</strain>
    </source>
</reference>
<feature type="chain" id="PRO_1000199201" description="Leucine--tRNA ligase">
    <location>
        <begin position="1"/>
        <end position="860"/>
    </location>
</feature>
<feature type="short sequence motif" description="'HIGH' region">
    <location>
        <begin position="42"/>
        <end position="52"/>
    </location>
</feature>
<feature type="short sequence motif" description="'KMSKS' region">
    <location>
        <begin position="619"/>
        <end position="623"/>
    </location>
</feature>
<feature type="binding site" evidence="1">
    <location>
        <position position="622"/>
    </location>
    <ligand>
        <name>ATP</name>
        <dbReference type="ChEBI" id="CHEBI:30616"/>
    </ligand>
</feature>
<sequence>MQEQYRPEEIESKVQLHWDEKRTFEVTEDESKEKYYCLSMLPYPSGRLHMGHVRNYTIGDVIARYQRMLGKNVLQPIGWDAFGLPAEGAAVKNNTAPAPWTYDNIAYMKNQLKMLGFGYDWSRELATCTPEYYRWEQKFFTELYKKGLVYKKTSAVNWCPNDQTVLANEQVIDGCCWRCDTKVERKEIPQWFIKITAYADELLNDLDKLDHWPDTVKTMQRNWIGRSEGVEITFNVNDYDNTLTVYTTRPDTFMGCTYLAVAAGHPLAQKAAENNPELAAFIDECRNTKVAEAEMATMEKKGVDTGFKAVHPLTGEEIPVWAANFVLMEYGTGAVMAVPGHDQRDYEFASKYGLNIKPVILAADGSEPDLSQQALTEKGVLFNSGEFNGLDHEAAFNAIADKLTAMGVGERKVNYRLRDWGVSRQRYWGAPIPMVTLEDGTVMPTPDDQLPVILPEDVVMDGITSPIKADPEWAKTTVNGMPALRETDTFDTFMESSWYYARYTCPQYKEGMLDSKAANYWLPVDIYIGGIEHAIMHLLYFRFFHKLMRDAGMVNSDEPAKQLLCQGMVLADAFYYVGENGERNWVSPVDAIVERDEKGRIVKAKDAAGHELVYTGMSKMSKSKNNGIDPQVMVERYGADTVRLFMMFASPADMTLEWQESGVEGANRFLKRVWKLVYEHTAKGDVAALNVDALTEDQKALRRDVHKTIAKVTDDIGRRQTFNTAIAAIMELMNKLAKAPTDGEQDRALMQEALLAVVRMLNPFTPHICFTLWQELKGEGDIDNAPWPVADEKAMVEDSTLVVVQVNGKVRAKITVPVDATEEQVRERAGQEHLVAKYLDGVTVRKVIYVPGKLLNLVVG</sequence>
<evidence type="ECO:0000255" key="1">
    <source>
        <dbReference type="HAMAP-Rule" id="MF_00049"/>
    </source>
</evidence>
<accession>B7UKT2</accession>